<proteinExistence type="evidence at protein level"/>
<sequence>MSELNALLKDINGSLTATSESLERLSGIYSNSATDEIPESNQLHEHLFYDAKKPAEKVSLLSLKNGSMLGYINSLLMLIGNRLDDECKDPSAMDARERSIQHRVVLERGVKPLEKKLAYQLDKLTRAYVKMEKEYKDAEKRALEKSTLVNHSGNDDSEDDESSEDEIAYRPNTSGIINTNKKSSAYRVEETAKQENGEENDDNETGVYKPPKITAVLPPQQTHFEDRFDAREHKDRSNKSRMQAMEEYIRESSDQPDWSASIGADIVNHGRGGIKSLRDTEKERRVTSFEEDNFTRLNITNKAEKRKQKQRERNARMNVIGGEDFGIFSSKRKLEDSTSRRGAKKTRSAWDRAQRRL</sequence>
<name>LCP5_YEAST</name>
<protein>
    <recommendedName>
        <fullName>U3 small nucleolar ribonucleoprotein protein LCP5</fullName>
    </recommendedName>
</protein>
<reference key="1">
    <citation type="journal article" date="1997" name="Nature">
        <title>The nucleotide sequence of Saccharomyces cerevisiae chromosome V.</title>
        <authorList>
            <person name="Dietrich F.S."/>
            <person name="Mulligan J.T."/>
            <person name="Hennessy K.M."/>
            <person name="Yelton M.A."/>
            <person name="Allen E."/>
            <person name="Araujo R."/>
            <person name="Aviles E."/>
            <person name="Berno A."/>
            <person name="Brennan T."/>
            <person name="Carpenter J."/>
            <person name="Chen E."/>
            <person name="Cherry J.M."/>
            <person name="Chung E."/>
            <person name="Duncan M."/>
            <person name="Guzman E."/>
            <person name="Hartzell G."/>
            <person name="Hunicke-Smith S."/>
            <person name="Hyman R.W."/>
            <person name="Kayser A."/>
            <person name="Komp C."/>
            <person name="Lashkari D."/>
            <person name="Lew H."/>
            <person name="Lin D."/>
            <person name="Mosedale D."/>
            <person name="Nakahara K."/>
            <person name="Namath A."/>
            <person name="Norgren R."/>
            <person name="Oefner P."/>
            <person name="Oh C."/>
            <person name="Petel F.X."/>
            <person name="Roberts D."/>
            <person name="Sehl P."/>
            <person name="Schramm S."/>
            <person name="Shogren T."/>
            <person name="Smith V."/>
            <person name="Taylor P."/>
            <person name="Wei Y."/>
            <person name="Botstein D."/>
            <person name="Davis R.W."/>
        </authorList>
    </citation>
    <scope>NUCLEOTIDE SEQUENCE [LARGE SCALE GENOMIC DNA]</scope>
    <source>
        <strain>ATCC 204508 / S288c</strain>
    </source>
</reference>
<reference key="2">
    <citation type="journal article" date="2014" name="G3 (Bethesda)">
        <title>The reference genome sequence of Saccharomyces cerevisiae: Then and now.</title>
        <authorList>
            <person name="Engel S.R."/>
            <person name="Dietrich F.S."/>
            <person name="Fisk D.G."/>
            <person name="Binkley G."/>
            <person name="Balakrishnan R."/>
            <person name="Costanzo M.C."/>
            <person name="Dwight S.S."/>
            <person name="Hitz B.C."/>
            <person name="Karra K."/>
            <person name="Nash R.S."/>
            <person name="Weng S."/>
            <person name="Wong E.D."/>
            <person name="Lloyd P."/>
            <person name="Skrzypek M.S."/>
            <person name="Miyasato S.R."/>
            <person name="Simison M."/>
            <person name="Cherry J.M."/>
        </authorList>
    </citation>
    <scope>GENOME REANNOTATION</scope>
    <source>
        <strain>ATCC 204508 / S288c</strain>
    </source>
</reference>
<reference key="3">
    <citation type="journal article" date="1998" name="RNA">
        <title>Synthetic lethal interactions with conditional poly(A) polymerase alleles identify LCP5, a gene involved in 18S rRNA maturation.</title>
        <authorList>
            <person name="Wiederkehr T."/>
            <person name="Pretot R.F."/>
            <person name="Minvielle-Sebastia L."/>
        </authorList>
    </citation>
    <scope>CHARACTERIZATION</scope>
</reference>
<reference key="4">
    <citation type="journal article" date="2003" name="Mol. Cell">
        <title>Assigning function to yeast proteins by integration of technologies.</title>
        <authorList>
            <person name="Hazbun T.R."/>
            <person name="Malmstroem L."/>
            <person name="Anderson S."/>
            <person name="Graczyk B.J."/>
            <person name="Fox B."/>
            <person name="Riffle M."/>
            <person name="Sundin B.A."/>
            <person name="Aranda J.D."/>
            <person name="McDonald W.H."/>
            <person name="Chiu C.-H."/>
            <person name="Snydsman B.E."/>
            <person name="Bradley P."/>
            <person name="Muller E.G.D."/>
            <person name="Fields S."/>
            <person name="Baker D."/>
            <person name="Yates J.R. III"/>
            <person name="Davis T.N."/>
        </authorList>
    </citation>
    <scope>IDENTIFICATION BY MASS SPECTROMETRY</scope>
</reference>
<reference key="5">
    <citation type="journal article" date="2003" name="Nature">
        <title>Global analysis of protein expression in yeast.</title>
        <authorList>
            <person name="Ghaemmaghami S."/>
            <person name="Huh W.-K."/>
            <person name="Bower K."/>
            <person name="Howson R.W."/>
            <person name="Belle A."/>
            <person name="Dephoure N."/>
            <person name="O'Shea E.K."/>
            <person name="Weissman J.S."/>
        </authorList>
    </citation>
    <scope>LEVEL OF PROTEIN EXPRESSION [LARGE SCALE ANALYSIS]</scope>
</reference>
<reference key="6">
    <citation type="journal article" date="2008" name="Mol. Cell. Proteomics">
        <title>A multidimensional chromatography technology for in-depth phosphoproteome analysis.</title>
        <authorList>
            <person name="Albuquerque C.P."/>
            <person name="Smolka M.B."/>
            <person name="Payne S.H."/>
            <person name="Bafna V."/>
            <person name="Eng J."/>
            <person name="Zhou H."/>
        </authorList>
    </citation>
    <scope>IDENTIFICATION BY MASS SPECTROMETRY [LARGE SCALE ANALYSIS]</scope>
</reference>
<reference key="7">
    <citation type="journal article" date="2012" name="Proc. Natl. Acad. Sci. U.S.A.">
        <title>N-terminal acetylome analyses and functional insights of the N-terminal acetyltransferase NatB.</title>
        <authorList>
            <person name="Van Damme P."/>
            <person name="Lasa M."/>
            <person name="Polevoda B."/>
            <person name="Gazquez C."/>
            <person name="Elosegui-Artola A."/>
            <person name="Kim D.S."/>
            <person name="De Juan-Pardo E."/>
            <person name="Demeyer K."/>
            <person name="Hole K."/>
            <person name="Larrea E."/>
            <person name="Timmerman E."/>
            <person name="Prieto J."/>
            <person name="Arnesen T."/>
            <person name="Sherman F."/>
            <person name="Gevaert K."/>
            <person name="Aldabe R."/>
        </authorList>
    </citation>
    <scope>ACETYLATION [LARGE SCALE ANALYSIS] AT SER-2</scope>
    <scope>CLEAVAGE OF INITIATOR METHIONINE [LARGE SCALE ANALYSIS]</scope>
    <scope>IDENTIFICATION BY MASS SPECTROMETRY [LARGE SCALE ANALYSIS]</scope>
</reference>
<accession>P40079</accession>
<accession>D3DM33</accession>
<gene>
    <name type="primary">LCP5</name>
    <name type="ordered locus">YER127W</name>
    <name type="ORF">SYGP-ORF43</name>
</gene>
<feature type="initiator methionine" description="Removed" evidence="3">
    <location>
        <position position="1"/>
    </location>
</feature>
<feature type="chain" id="PRO_0000084370" description="U3 small nucleolar ribonucleoprotein protein LCP5">
    <location>
        <begin position="2"/>
        <end position="357"/>
    </location>
</feature>
<feature type="region of interest" description="Disordered" evidence="1">
    <location>
        <begin position="146"/>
        <end position="211"/>
    </location>
</feature>
<feature type="region of interest" description="Disordered" evidence="1">
    <location>
        <begin position="301"/>
        <end position="357"/>
    </location>
</feature>
<feature type="compositionally biased region" description="Acidic residues" evidence="1">
    <location>
        <begin position="155"/>
        <end position="166"/>
    </location>
</feature>
<feature type="compositionally biased region" description="Polar residues" evidence="1">
    <location>
        <begin position="171"/>
        <end position="183"/>
    </location>
</feature>
<feature type="compositionally biased region" description="Basic and acidic residues" evidence="1">
    <location>
        <begin position="187"/>
        <end position="196"/>
    </location>
</feature>
<feature type="compositionally biased region" description="Basic and acidic residues" evidence="1">
    <location>
        <begin position="348"/>
        <end position="357"/>
    </location>
</feature>
<feature type="modified residue" description="N-acetylserine" evidence="3">
    <location>
        <position position="2"/>
    </location>
</feature>
<keyword id="KW-0002">3D-structure</keyword>
<keyword id="KW-0007">Acetylation</keyword>
<keyword id="KW-0539">Nucleus</keyword>
<keyword id="KW-1185">Reference proteome</keyword>
<keyword id="KW-0687">Ribonucleoprotein</keyword>
<keyword id="KW-0690">Ribosome biogenesis</keyword>
<keyword id="KW-0698">rRNA processing</keyword>
<comment type="function">
    <text>Component of the U3 small nucleolar ribonucleoprotein. Required for the early cleavages at sites A0, A1 and A2 of the pre-ribosomal RNA. Participates in ribosome biogenesis.</text>
</comment>
<comment type="interaction">
    <interactant intactId="EBI-10103">
        <id>P40079</id>
    </interactant>
    <interactant intactId="EBI-36432">
        <id>Q06631</id>
        <label>BFR2</label>
    </interactant>
    <organismsDiffer>false</organismsDiffer>
    <experiments>7</experiments>
</comment>
<comment type="interaction">
    <interactant intactId="EBI-10103">
        <id>P40079</id>
    </interactant>
    <interactant intactId="EBI-4534">
        <id>P40362</id>
        <label>UTP18</label>
    </interactant>
    <organismsDiffer>false</organismsDiffer>
    <experiments>3</experiments>
</comment>
<comment type="subcellular location">
    <subcellularLocation>
        <location>Nucleus</location>
        <location>Nucleolus</location>
    </subcellularLocation>
</comment>
<comment type="miscellaneous">
    <text evidence="2">Present with 1430 molecules/cell in log phase SD medium.</text>
</comment>
<dbReference type="EMBL" id="U18916">
    <property type="protein sequence ID" value="AAC03225.1"/>
    <property type="molecule type" value="Genomic_DNA"/>
</dbReference>
<dbReference type="EMBL" id="BK006939">
    <property type="protein sequence ID" value="DAA07787.1"/>
    <property type="molecule type" value="Genomic_DNA"/>
</dbReference>
<dbReference type="PIR" id="S43220">
    <property type="entry name" value="S43220"/>
</dbReference>
<dbReference type="RefSeq" id="NP_011053.1">
    <property type="nucleotide sequence ID" value="NM_001179017.1"/>
</dbReference>
<dbReference type="PDB" id="5WLC">
    <property type="method" value="EM"/>
    <property type="resolution" value="3.80 A"/>
    <property type="chains" value="NC=1-357"/>
</dbReference>
<dbReference type="PDB" id="6KE6">
    <property type="method" value="EM"/>
    <property type="resolution" value="3.40 A"/>
    <property type="chains" value="RB=1-357"/>
</dbReference>
<dbReference type="PDB" id="6LQP">
    <property type="method" value="EM"/>
    <property type="resolution" value="3.20 A"/>
    <property type="chains" value="RB=1-357"/>
</dbReference>
<dbReference type="PDB" id="6LQQ">
    <property type="method" value="EM"/>
    <property type="resolution" value="4.10 A"/>
    <property type="chains" value="RB=1-357"/>
</dbReference>
<dbReference type="PDB" id="6LQR">
    <property type="method" value="EM"/>
    <property type="resolution" value="8.60 A"/>
    <property type="chains" value="RB=1-357"/>
</dbReference>
<dbReference type="PDB" id="6LQU">
    <property type="method" value="EM"/>
    <property type="resolution" value="3.70 A"/>
    <property type="chains" value="RB=1-357"/>
</dbReference>
<dbReference type="PDB" id="6LQV">
    <property type="method" value="EM"/>
    <property type="resolution" value="4.80 A"/>
    <property type="chains" value="RB=1-357"/>
</dbReference>
<dbReference type="PDB" id="6ZQB">
    <property type="method" value="EM"/>
    <property type="resolution" value="3.90 A"/>
    <property type="chains" value="JE=1-357"/>
</dbReference>
<dbReference type="PDB" id="7D63">
    <property type="method" value="EM"/>
    <property type="resolution" value="12.30 A"/>
    <property type="chains" value="RB=1-357"/>
</dbReference>
<dbReference type="PDB" id="7SUK">
    <property type="method" value="EM"/>
    <property type="resolution" value="3.99 A"/>
    <property type="chains" value="6=1-357"/>
</dbReference>
<dbReference type="PDBsum" id="5WLC"/>
<dbReference type="PDBsum" id="6KE6"/>
<dbReference type="PDBsum" id="6LQP"/>
<dbReference type="PDBsum" id="6LQQ"/>
<dbReference type="PDBsum" id="6LQR"/>
<dbReference type="PDBsum" id="6LQU"/>
<dbReference type="PDBsum" id="6LQV"/>
<dbReference type="PDBsum" id="6ZQB"/>
<dbReference type="PDBsum" id="7D63"/>
<dbReference type="PDBsum" id="7SUK"/>
<dbReference type="EMDB" id="EMD-0949"/>
<dbReference type="EMDB" id="EMD-0950"/>
<dbReference type="EMDB" id="EMD-0951"/>
<dbReference type="EMDB" id="EMD-0954"/>
<dbReference type="EMDB" id="EMD-0955"/>
<dbReference type="EMDB" id="EMD-11358"/>
<dbReference type="EMDB" id="EMD-25441"/>
<dbReference type="EMDB" id="EMD-30588"/>
<dbReference type="EMDB" id="EMD-8859"/>
<dbReference type="EMDB" id="EMD-9964"/>
<dbReference type="SMR" id="P40079"/>
<dbReference type="BioGRID" id="36871">
    <property type="interactions" value="246"/>
</dbReference>
<dbReference type="ComplexPortal" id="CPX-1604">
    <property type="entry name" value="Small ribosomal subunit processome"/>
</dbReference>
<dbReference type="DIP" id="DIP-1410N"/>
<dbReference type="FunCoup" id="P40079">
    <property type="interactions" value="1338"/>
</dbReference>
<dbReference type="IntAct" id="P40079">
    <property type="interactions" value="66"/>
</dbReference>
<dbReference type="MINT" id="P40079"/>
<dbReference type="STRING" id="4932.YER127W"/>
<dbReference type="iPTMnet" id="P40079"/>
<dbReference type="PaxDb" id="4932-YER127W"/>
<dbReference type="PeptideAtlas" id="P40079"/>
<dbReference type="EnsemblFungi" id="YER127W_mRNA">
    <property type="protein sequence ID" value="YER127W"/>
    <property type="gene ID" value="YER127W"/>
</dbReference>
<dbReference type="GeneID" id="856864"/>
<dbReference type="KEGG" id="sce:YER127W"/>
<dbReference type="AGR" id="SGD:S000000929"/>
<dbReference type="SGD" id="S000000929">
    <property type="gene designation" value="LCP5"/>
</dbReference>
<dbReference type="VEuPathDB" id="FungiDB:YER127W"/>
<dbReference type="eggNOG" id="KOG3117">
    <property type="taxonomic scope" value="Eukaryota"/>
</dbReference>
<dbReference type="GeneTree" id="ENSGT00500000044922"/>
<dbReference type="HOGENOM" id="CLU_065858_0_0_1"/>
<dbReference type="InParanoid" id="P40079"/>
<dbReference type="OMA" id="RHTKSER"/>
<dbReference type="OrthoDB" id="203440at2759"/>
<dbReference type="BioCyc" id="YEAST:G3O-30290-MONOMER"/>
<dbReference type="BioGRID-ORCS" id="856864">
    <property type="hits" value="4 hits in 10 CRISPR screens"/>
</dbReference>
<dbReference type="PRO" id="PR:P40079"/>
<dbReference type="Proteomes" id="UP000002311">
    <property type="component" value="Chromosome V"/>
</dbReference>
<dbReference type="RNAct" id="P40079">
    <property type="molecule type" value="protein"/>
</dbReference>
<dbReference type="GO" id="GO:0005730">
    <property type="term" value="C:nucleolus"/>
    <property type="evidence" value="ECO:0000314"/>
    <property type="project" value="GO_Central"/>
</dbReference>
<dbReference type="GO" id="GO:0030532">
    <property type="term" value="C:small nuclear ribonucleoprotein complex"/>
    <property type="evidence" value="ECO:0000304"/>
    <property type="project" value="SGD"/>
</dbReference>
<dbReference type="GO" id="GO:0032040">
    <property type="term" value="C:small-subunit processome"/>
    <property type="evidence" value="ECO:0000353"/>
    <property type="project" value="ComplexPortal"/>
</dbReference>
<dbReference type="GO" id="GO:0005732">
    <property type="term" value="C:sno(s)RNA-containing ribonucleoprotein complex"/>
    <property type="evidence" value="ECO:0000304"/>
    <property type="project" value="SGD"/>
</dbReference>
<dbReference type="GO" id="GO:0000480">
    <property type="term" value="P:endonucleolytic cleavage in 5'-ETS of tricistronic rRNA transcript (SSU-rRNA, 5.8S rRNA, LSU-rRNA)"/>
    <property type="evidence" value="ECO:0000315"/>
    <property type="project" value="GO_Central"/>
</dbReference>
<dbReference type="GO" id="GO:0000447">
    <property type="term" value="P:endonucleolytic cleavage in ITS1 to separate SSU-rRNA from 5.8S rRNA and LSU-rRNA from tricistronic rRNA transcript (SSU-rRNA, 5.8S rRNA, LSU-rRNA)"/>
    <property type="evidence" value="ECO:0000315"/>
    <property type="project" value="GO_Central"/>
</dbReference>
<dbReference type="GO" id="GO:0030490">
    <property type="term" value="P:maturation of SSU-rRNA"/>
    <property type="evidence" value="ECO:0000303"/>
    <property type="project" value="ComplexPortal"/>
</dbReference>
<dbReference type="GO" id="GO:0000462">
    <property type="term" value="P:maturation of SSU-rRNA from tricistronic rRNA transcript (SSU-rRNA, 5.8S rRNA, LSU-rRNA)"/>
    <property type="evidence" value="ECO:0000318"/>
    <property type="project" value="GO_Central"/>
</dbReference>
<dbReference type="InterPro" id="IPR007146">
    <property type="entry name" value="Sas10/Utp3/C1D"/>
</dbReference>
<dbReference type="Pfam" id="PF04000">
    <property type="entry name" value="Sas10_Utp3"/>
    <property type="match status" value="1"/>
</dbReference>
<evidence type="ECO:0000256" key="1">
    <source>
        <dbReference type="SAM" id="MobiDB-lite"/>
    </source>
</evidence>
<evidence type="ECO:0000269" key="2">
    <source>
    </source>
</evidence>
<evidence type="ECO:0007744" key="3">
    <source>
    </source>
</evidence>
<organism>
    <name type="scientific">Saccharomyces cerevisiae (strain ATCC 204508 / S288c)</name>
    <name type="common">Baker's yeast</name>
    <dbReference type="NCBI Taxonomy" id="559292"/>
    <lineage>
        <taxon>Eukaryota</taxon>
        <taxon>Fungi</taxon>
        <taxon>Dikarya</taxon>
        <taxon>Ascomycota</taxon>
        <taxon>Saccharomycotina</taxon>
        <taxon>Saccharomycetes</taxon>
        <taxon>Saccharomycetales</taxon>
        <taxon>Saccharomycetaceae</taxon>
        <taxon>Saccharomyces</taxon>
    </lineage>
</organism>